<keyword id="KW-0238">DNA-binding</keyword>
<keyword id="KW-0597">Phosphoprotein</keyword>
<keyword id="KW-1185">Reference proteome</keyword>
<keyword id="KW-0804">Transcription</keyword>
<keyword id="KW-0805">Transcription regulation</keyword>
<keyword id="KW-0902">Two-component regulatory system</keyword>
<feature type="chain" id="PRO_0000081363" description="Transcriptional regulatory protein BtsR">
    <location>
        <begin position="1"/>
        <end position="239"/>
    </location>
</feature>
<feature type="domain" description="Response regulatory" evidence="3">
    <location>
        <begin position="3"/>
        <end position="116"/>
    </location>
</feature>
<feature type="domain" description="HTH LytTR-type" evidence="2">
    <location>
        <begin position="137"/>
        <end position="239"/>
    </location>
</feature>
<feature type="modified residue" description="4-aspartylphosphate" evidence="3">
    <location>
        <position position="54"/>
    </location>
</feature>
<dbReference type="EMBL" id="AE014075">
    <property type="protein sequence ID" value="AAN81111.1"/>
    <property type="status" value="ALT_INIT"/>
    <property type="molecule type" value="Genomic_DNA"/>
</dbReference>
<dbReference type="RefSeq" id="WP_000598641.1">
    <property type="nucleotide sequence ID" value="NZ_CP051263.1"/>
</dbReference>
<dbReference type="SMR" id="P0AFT6"/>
<dbReference type="STRING" id="199310.c2655"/>
<dbReference type="GeneID" id="93775070"/>
<dbReference type="KEGG" id="ecc:c2655"/>
<dbReference type="eggNOG" id="COG3279">
    <property type="taxonomic scope" value="Bacteria"/>
</dbReference>
<dbReference type="HOGENOM" id="CLU_000445_14_1_6"/>
<dbReference type="Proteomes" id="UP000001410">
    <property type="component" value="Chromosome"/>
</dbReference>
<dbReference type="GO" id="GO:0003677">
    <property type="term" value="F:DNA binding"/>
    <property type="evidence" value="ECO:0007669"/>
    <property type="project" value="UniProtKB-KW"/>
</dbReference>
<dbReference type="GO" id="GO:0000156">
    <property type="term" value="F:phosphorelay response regulator activity"/>
    <property type="evidence" value="ECO:0007669"/>
    <property type="project" value="InterPro"/>
</dbReference>
<dbReference type="CDD" id="cd17532">
    <property type="entry name" value="REC_LytTR_AlgR-like"/>
    <property type="match status" value="1"/>
</dbReference>
<dbReference type="FunFam" id="2.40.50.1020:FF:000001">
    <property type="entry name" value="Two-component response regulator yehT"/>
    <property type="match status" value="1"/>
</dbReference>
<dbReference type="FunFam" id="3.40.50.2300:FF:000051">
    <property type="entry name" value="Two-component response regulator yehT"/>
    <property type="match status" value="1"/>
</dbReference>
<dbReference type="Gene3D" id="3.40.50.2300">
    <property type="match status" value="1"/>
</dbReference>
<dbReference type="Gene3D" id="2.40.50.1020">
    <property type="entry name" value="LytTr DNA-binding domain"/>
    <property type="match status" value="1"/>
</dbReference>
<dbReference type="InterPro" id="IPR011006">
    <property type="entry name" value="CheY-like_superfamily"/>
</dbReference>
<dbReference type="InterPro" id="IPR046947">
    <property type="entry name" value="LytR-like"/>
</dbReference>
<dbReference type="InterPro" id="IPR007492">
    <property type="entry name" value="LytTR_DNA-bd_dom"/>
</dbReference>
<dbReference type="InterPro" id="IPR001789">
    <property type="entry name" value="Sig_transdc_resp-reg_receiver"/>
</dbReference>
<dbReference type="NCBIfam" id="NF008677">
    <property type="entry name" value="PRK11697.1"/>
    <property type="match status" value="1"/>
</dbReference>
<dbReference type="PANTHER" id="PTHR37299:SF1">
    <property type="entry name" value="STAGE 0 SPORULATION PROTEIN A HOMOLOG"/>
    <property type="match status" value="1"/>
</dbReference>
<dbReference type="PANTHER" id="PTHR37299">
    <property type="entry name" value="TRANSCRIPTIONAL REGULATOR-RELATED"/>
    <property type="match status" value="1"/>
</dbReference>
<dbReference type="Pfam" id="PF04397">
    <property type="entry name" value="LytTR"/>
    <property type="match status" value="1"/>
</dbReference>
<dbReference type="Pfam" id="PF00072">
    <property type="entry name" value="Response_reg"/>
    <property type="match status" value="1"/>
</dbReference>
<dbReference type="SMART" id="SM00850">
    <property type="entry name" value="LytTR"/>
    <property type="match status" value="1"/>
</dbReference>
<dbReference type="SMART" id="SM00448">
    <property type="entry name" value="REC"/>
    <property type="match status" value="1"/>
</dbReference>
<dbReference type="SUPFAM" id="SSF52172">
    <property type="entry name" value="CheY-like"/>
    <property type="match status" value="1"/>
</dbReference>
<dbReference type="PROSITE" id="PS50930">
    <property type="entry name" value="HTH_LYTTR"/>
    <property type="match status" value="1"/>
</dbReference>
<dbReference type="PROSITE" id="PS50110">
    <property type="entry name" value="RESPONSE_REGULATORY"/>
    <property type="match status" value="1"/>
</dbReference>
<organism>
    <name type="scientific">Escherichia coli O6:H1 (strain CFT073 / ATCC 700928 / UPEC)</name>
    <dbReference type="NCBI Taxonomy" id="199310"/>
    <lineage>
        <taxon>Bacteria</taxon>
        <taxon>Pseudomonadati</taxon>
        <taxon>Pseudomonadota</taxon>
        <taxon>Gammaproteobacteria</taxon>
        <taxon>Enterobacterales</taxon>
        <taxon>Enterobacteriaceae</taxon>
        <taxon>Escherichia</taxon>
    </lineage>
</organism>
<reference key="1">
    <citation type="journal article" date="2002" name="Proc. Natl. Acad. Sci. U.S.A.">
        <title>Extensive mosaic structure revealed by the complete genome sequence of uropathogenic Escherichia coli.</title>
        <authorList>
            <person name="Welch R.A."/>
            <person name="Burland V."/>
            <person name="Plunkett G. III"/>
            <person name="Redford P."/>
            <person name="Roesch P."/>
            <person name="Rasko D."/>
            <person name="Buckles E.L."/>
            <person name="Liou S.-R."/>
            <person name="Boutin A."/>
            <person name="Hackett J."/>
            <person name="Stroud D."/>
            <person name="Mayhew G.F."/>
            <person name="Rose D.J."/>
            <person name="Zhou S."/>
            <person name="Schwartz D.C."/>
            <person name="Perna N.T."/>
            <person name="Mobley H.L.T."/>
            <person name="Donnenberg M.S."/>
            <person name="Blattner F.R."/>
        </authorList>
    </citation>
    <scope>NUCLEOTIDE SEQUENCE [LARGE SCALE GENOMIC DNA]</scope>
    <source>
        <strain>CFT073 / ATCC 700928 / UPEC</strain>
    </source>
</reference>
<comment type="function">
    <text evidence="1">Member of the two-component regulatory system BtsS/BtsR. BtsR regulates expression of btsT by binding to its promoter region.</text>
</comment>
<comment type="PTM">
    <text evidence="1">Phosphorylated by BtsS.</text>
</comment>
<comment type="sequence caution" evidence="4">
    <conflict type="erroneous initiation">
        <sequence resource="EMBL-CDS" id="AAN81111"/>
    </conflict>
    <text>Extended N-terminus.</text>
</comment>
<proteinExistence type="inferred from homology"/>
<accession>P0AFT6</accession>
<accession>P33356</accession>
<accession>P76432</accession>
<accession>P76433</accession>
<accession>Q9ALR8</accession>
<gene>
    <name evidence="1" type="primary">btsR</name>
    <name type="synonym">yehT</name>
    <name type="ordered locus">c2655</name>
</gene>
<protein>
    <recommendedName>
        <fullName evidence="1">Transcriptional regulatory protein BtsR</fullName>
    </recommendedName>
</protein>
<name>BTSR_ECOL6</name>
<evidence type="ECO:0000250" key="1">
    <source>
        <dbReference type="UniProtKB" id="P0AFT5"/>
    </source>
</evidence>
<evidence type="ECO:0000255" key="2">
    <source>
        <dbReference type="PROSITE-ProRule" id="PRU00112"/>
    </source>
</evidence>
<evidence type="ECO:0000255" key="3">
    <source>
        <dbReference type="PROSITE-ProRule" id="PRU00169"/>
    </source>
</evidence>
<evidence type="ECO:0000305" key="4"/>
<sequence length="239" mass="27400">MIKVLIVDDEPLARENLRVFLQEQSDIEIVGECSNAVEGIGAVHKLRPDVLFLDIQMPRISGLEMVGMLDPEHRPYIVFLTAFDEYAIKAFEEHAFDYLLKPIDEARLEKTLARLRQERSKQDVSLLPENQQALKFIPCTGHSRIYLLQMKDVAFVSSRMSGVYVTSHEGKEGFTELTLRTLESRTPLLRCHRQYLVNLAHLQEIRLEDNGQAELILRNGLTVPVSRRYLKSLKEAIGL</sequence>